<sequence length="321" mass="35377">MKTTFLDFEQPIAELEEKIEQLRFVQDDSAVDISEEIARLEVKSQALTKDLYAKLTPWQIAQVARHPQRPYTLDYVQHIFTDFEELHGDRAYADDKAIVGGLARFNGQSCVIIGHQKGRDTKEKIARNFGMPRPEGYRKAMRLMKLAEKFGLPVFTFVDTPGAYPGIGAEERGQSEAIGHNLYVMAELKVPLICTVIGEGGSGGALAIAVGDQVMMMQYSTYSVISPEGCASILWKSAEKASEAAETMGITAARLKSLGLVDKVVNEPVGGAHRDHRAAAQSLKRALAEALRQVDTLSPSELVEQRMEKLMGYGRFKEIAA</sequence>
<reference key="1">
    <citation type="journal article" date="2006" name="Nat. Biotechnol.">
        <title>Complete genome of the mutualistic, N2-fixing grass endophyte Azoarcus sp. strain BH72.</title>
        <authorList>
            <person name="Krause A."/>
            <person name="Ramakumar A."/>
            <person name="Bartels D."/>
            <person name="Battistoni F."/>
            <person name="Bekel T."/>
            <person name="Boch J."/>
            <person name="Boehm M."/>
            <person name="Friedrich F."/>
            <person name="Hurek T."/>
            <person name="Krause L."/>
            <person name="Linke B."/>
            <person name="McHardy A.C."/>
            <person name="Sarkar A."/>
            <person name="Schneiker S."/>
            <person name="Syed A.A."/>
            <person name="Thauer R."/>
            <person name="Vorhoelter F.-J."/>
            <person name="Weidner S."/>
            <person name="Puehler A."/>
            <person name="Reinhold-Hurek B."/>
            <person name="Kaiser O."/>
            <person name="Goesmann A."/>
        </authorList>
    </citation>
    <scope>NUCLEOTIDE SEQUENCE [LARGE SCALE GENOMIC DNA]</scope>
    <source>
        <strain>BH72</strain>
    </source>
</reference>
<comment type="function">
    <text evidence="1">Component of the acetyl coenzyme A carboxylase (ACC) complex. First, biotin carboxylase catalyzes the carboxylation of biotin on its carrier protein (BCCP) and then the CO(2) group is transferred by the carboxyltransferase to acetyl-CoA to form malonyl-CoA.</text>
</comment>
<comment type="catalytic activity">
    <reaction evidence="1">
        <text>N(6)-carboxybiotinyl-L-lysyl-[protein] + acetyl-CoA = N(6)-biotinyl-L-lysyl-[protein] + malonyl-CoA</text>
        <dbReference type="Rhea" id="RHEA:54728"/>
        <dbReference type="Rhea" id="RHEA-COMP:10505"/>
        <dbReference type="Rhea" id="RHEA-COMP:10506"/>
        <dbReference type="ChEBI" id="CHEBI:57288"/>
        <dbReference type="ChEBI" id="CHEBI:57384"/>
        <dbReference type="ChEBI" id="CHEBI:83144"/>
        <dbReference type="ChEBI" id="CHEBI:83145"/>
        <dbReference type="EC" id="2.1.3.15"/>
    </reaction>
</comment>
<comment type="pathway">
    <text evidence="1">Lipid metabolism; malonyl-CoA biosynthesis; malonyl-CoA from acetyl-CoA: step 1/1.</text>
</comment>
<comment type="subunit">
    <text evidence="1">Acetyl-CoA carboxylase is a heterohexamer composed of biotin carboxyl carrier protein (AccB), biotin carboxylase (AccC) and two subunits each of ACCase subunit alpha (AccA) and ACCase subunit beta (AccD).</text>
</comment>
<comment type="subcellular location">
    <subcellularLocation>
        <location evidence="1">Cytoplasm</location>
    </subcellularLocation>
</comment>
<comment type="similarity">
    <text evidence="1">Belongs to the AccA family.</text>
</comment>
<protein>
    <recommendedName>
        <fullName evidence="1">Acetyl-coenzyme A carboxylase carboxyl transferase subunit alpha</fullName>
        <shortName evidence="1">ACCase subunit alpha</shortName>
        <shortName evidence="1">Acetyl-CoA carboxylase carboxyltransferase subunit alpha</shortName>
        <ecNumber evidence="1">2.1.3.15</ecNumber>
    </recommendedName>
</protein>
<proteinExistence type="inferred from homology"/>
<keyword id="KW-0067">ATP-binding</keyword>
<keyword id="KW-0963">Cytoplasm</keyword>
<keyword id="KW-0275">Fatty acid biosynthesis</keyword>
<keyword id="KW-0276">Fatty acid metabolism</keyword>
<keyword id="KW-0444">Lipid biosynthesis</keyword>
<keyword id="KW-0443">Lipid metabolism</keyword>
<keyword id="KW-0547">Nucleotide-binding</keyword>
<keyword id="KW-1185">Reference proteome</keyword>
<keyword id="KW-0808">Transferase</keyword>
<gene>
    <name evidence="1" type="primary">accA</name>
    <name type="ordered locus">azo0915</name>
</gene>
<feature type="chain" id="PRO_1000062576" description="Acetyl-coenzyme A carboxylase carboxyl transferase subunit alpha">
    <location>
        <begin position="1"/>
        <end position="321"/>
    </location>
</feature>
<feature type="domain" description="CoA carboxyltransferase C-terminal" evidence="2">
    <location>
        <begin position="39"/>
        <end position="293"/>
    </location>
</feature>
<name>ACCA_AZOSB</name>
<organism>
    <name type="scientific">Azoarcus sp. (strain BH72)</name>
    <dbReference type="NCBI Taxonomy" id="418699"/>
    <lineage>
        <taxon>Bacteria</taxon>
        <taxon>Pseudomonadati</taxon>
        <taxon>Pseudomonadota</taxon>
        <taxon>Betaproteobacteria</taxon>
        <taxon>Rhodocyclales</taxon>
        <taxon>Zoogloeaceae</taxon>
        <taxon>Azoarcus</taxon>
    </lineage>
</organism>
<dbReference type="EC" id="2.1.3.15" evidence="1"/>
<dbReference type="EMBL" id="AM406670">
    <property type="protein sequence ID" value="CAL93532.1"/>
    <property type="molecule type" value="Genomic_DNA"/>
</dbReference>
<dbReference type="RefSeq" id="WP_011764649.1">
    <property type="nucleotide sequence ID" value="NC_008702.1"/>
</dbReference>
<dbReference type="SMR" id="A1K3X7"/>
<dbReference type="STRING" id="62928.azo0915"/>
<dbReference type="KEGG" id="aoa:dqs_0987"/>
<dbReference type="KEGG" id="azo:azo0915"/>
<dbReference type="eggNOG" id="COG0825">
    <property type="taxonomic scope" value="Bacteria"/>
</dbReference>
<dbReference type="HOGENOM" id="CLU_015486_0_2_4"/>
<dbReference type="OrthoDB" id="9808023at2"/>
<dbReference type="UniPathway" id="UPA00655">
    <property type="reaction ID" value="UER00711"/>
</dbReference>
<dbReference type="Proteomes" id="UP000002588">
    <property type="component" value="Chromosome"/>
</dbReference>
<dbReference type="GO" id="GO:0009317">
    <property type="term" value="C:acetyl-CoA carboxylase complex"/>
    <property type="evidence" value="ECO:0007669"/>
    <property type="project" value="InterPro"/>
</dbReference>
<dbReference type="GO" id="GO:0003989">
    <property type="term" value="F:acetyl-CoA carboxylase activity"/>
    <property type="evidence" value="ECO:0007669"/>
    <property type="project" value="InterPro"/>
</dbReference>
<dbReference type="GO" id="GO:0005524">
    <property type="term" value="F:ATP binding"/>
    <property type="evidence" value="ECO:0007669"/>
    <property type="project" value="UniProtKB-KW"/>
</dbReference>
<dbReference type="GO" id="GO:0016743">
    <property type="term" value="F:carboxyl- or carbamoyltransferase activity"/>
    <property type="evidence" value="ECO:0007669"/>
    <property type="project" value="UniProtKB-UniRule"/>
</dbReference>
<dbReference type="GO" id="GO:0006633">
    <property type="term" value="P:fatty acid biosynthetic process"/>
    <property type="evidence" value="ECO:0007669"/>
    <property type="project" value="UniProtKB-KW"/>
</dbReference>
<dbReference type="GO" id="GO:2001295">
    <property type="term" value="P:malonyl-CoA biosynthetic process"/>
    <property type="evidence" value="ECO:0007669"/>
    <property type="project" value="UniProtKB-UniRule"/>
</dbReference>
<dbReference type="FunFam" id="3.90.226.10:FF:000008">
    <property type="entry name" value="Acetyl-coenzyme A carboxylase carboxyl transferase subunit alpha"/>
    <property type="match status" value="1"/>
</dbReference>
<dbReference type="Gene3D" id="3.90.226.10">
    <property type="entry name" value="2-enoyl-CoA Hydratase, Chain A, domain 1"/>
    <property type="match status" value="1"/>
</dbReference>
<dbReference type="HAMAP" id="MF_00823">
    <property type="entry name" value="AcetylCoA_CT_alpha"/>
    <property type="match status" value="1"/>
</dbReference>
<dbReference type="InterPro" id="IPR001095">
    <property type="entry name" value="Acetyl_CoA_COase_a_su"/>
</dbReference>
<dbReference type="InterPro" id="IPR029045">
    <property type="entry name" value="ClpP/crotonase-like_dom_sf"/>
</dbReference>
<dbReference type="InterPro" id="IPR011763">
    <property type="entry name" value="COA_CT_C"/>
</dbReference>
<dbReference type="NCBIfam" id="TIGR00513">
    <property type="entry name" value="accA"/>
    <property type="match status" value="1"/>
</dbReference>
<dbReference type="NCBIfam" id="NF041504">
    <property type="entry name" value="AccA_sub"/>
    <property type="match status" value="1"/>
</dbReference>
<dbReference type="NCBIfam" id="NF004344">
    <property type="entry name" value="PRK05724.1"/>
    <property type="match status" value="1"/>
</dbReference>
<dbReference type="PANTHER" id="PTHR42853">
    <property type="entry name" value="ACETYL-COENZYME A CARBOXYLASE CARBOXYL TRANSFERASE SUBUNIT ALPHA"/>
    <property type="match status" value="1"/>
</dbReference>
<dbReference type="PANTHER" id="PTHR42853:SF3">
    <property type="entry name" value="ACETYL-COENZYME A CARBOXYLASE CARBOXYL TRANSFERASE SUBUNIT ALPHA, CHLOROPLASTIC"/>
    <property type="match status" value="1"/>
</dbReference>
<dbReference type="Pfam" id="PF03255">
    <property type="entry name" value="ACCA"/>
    <property type="match status" value="1"/>
</dbReference>
<dbReference type="PRINTS" id="PR01069">
    <property type="entry name" value="ACCCTRFRASEA"/>
</dbReference>
<dbReference type="SUPFAM" id="SSF52096">
    <property type="entry name" value="ClpP/crotonase"/>
    <property type="match status" value="1"/>
</dbReference>
<dbReference type="PROSITE" id="PS50989">
    <property type="entry name" value="COA_CT_CTER"/>
    <property type="match status" value="1"/>
</dbReference>
<evidence type="ECO:0000255" key="1">
    <source>
        <dbReference type="HAMAP-Rule" id="MF_00823"/>
    </source>
</evidence>
<evidence type="ECO:0000255" key="2">
    <source>
        <dbReference type="PROSITE-ProRule" id="PRU01137"/>
    </source>
</evidence>
<accession>A1K3X7</accession>